<dbReference type="EC" id="3.1.1.29" evidence="1"/>
<dbReference type="EMBL" id="CP000921">
    <property type="protein sequence ID" value="ACO23241.1"/>
    <property type="molecule type" value="Genomic_DNA"/>
</dbReference>
<dbReference type="RefSeq" id="WP_000163933.1">
    <property type="nucleotide sequence ID" value="NC_012469.1"/>
</dbReference>
<dbReference type="SMR" id="C1CNN8"/>
<dbReference type="KEGG" id="snt:SPT_0039"/>
<dbReference type="HOGENOM" id="CLU_062456_4_1_9"/>
<dbReference type="GO" id="GO:0005737">
    <property type="term" value="C:cytoplasm"/>
    <property type="evidence" value="ECO:0007669"/>
    <property type="project" value="UniProtKB-SubCell"/>
</dbReference>
<dbReference type="GO" id="GO:0004045">
    <property type="term" value="F:peptidyl-tRNA hydrolase activity"/>
    <property type="evidence" value="ECO:0007669"/>
    <property type="project" value="UniProtKB-UniRule"/>
</dbReference>
<dbReference type="GO" id="GO:0000049">
    <property type="term" value="F:tRNA binding"/>
    <property type="evidence" value="ECO:0007669"/>
    <property type="project" value="UniProtKB-UniRule"/>
</dbReference>
<dbReference type="GO" id="GO:0006515">
    <property type="term" value="P:protein quality control for misfolded or incompletely synthesized proteins"/>
    <property type="evidence" value="ECO:0007669"/>
    <property type="project" value="UniProtKB-UniRule"/>
</dbReference>
<dbReference type="GO" id="GO:0072344">
    <property type="term" value="P:rescue of stalled ribosome"/>
    <property type="evidence" value="ECO:0007669"/>
    <property type="project" value="UniProtKB-UniRule"/>
</dbReference>
<dbReference type="CDD" id="cd00462">
    <property type="entry name" value="PTH"/>
    <property type="match status" value="1"/>
</dbReference>
<dbReference type="FunFam" id="3.40.50.1470:FF:000001">
    <property type="entry name" value="Peptidyl-tRNA hydrolase"/>
    <property type="match status" value="1"/>
</dbReference>
<dbReference type="Gene3D" id="3.40.50.1470">
    <property type="entry name" value="Peptidyl-tRNA hydrolase"/>
    <property type="match status" value="1"/>
</dbReference>
<dbReference type="HAMAP" id="MF_00083">
    <property type="entry name" value="Pept_tRNA_hydro_bact"/>
    <property type="match status" value="1"/>
</dbReference>
<dbReference type="InterPro" id="IPR001328">
    <property type="entry name" value="Pept_tRNA_hydro"/>
</dbReference>
<dbReference type="InterPro" id="IPR018171">
    <property type="entry name" value="Pept_tRNA_hydro_CS"/>
</dbReference>
<dbReference type="InterPro" id="IPR036416">
    <property type="entry name" value="Pept_tRNA_hydro_sf"/>
</dbReference>
<dbReference type="NCBIfam" id="TIGR00447">
    <property type="entry name" value="pth"/>
    <property type="match status" value="1"/>
</dbReference>
<dbReference type="PANTHER" id="PTHR17224">
    <property type="entry name" value="PEPTIDYL-TRNA HYDROLASE"/>
    <property type="match status" value="1"/>
</dbReference>
<dbReference type="PANTHER" id="PTHR17224:SF1">
    <property type="entry name" value="PEPTIDYL-TRNA HYDROLASE"/>
    <property type="match status" value="1"/>
</dbReference>
<dbReference type="Pfam" id="PF01195">
    <property type="entry name" value="Pept_tRNA_hydro"/>
    <property type="match status" value="1"/>
</dbReference>
<dbReference type="SUPFAM" id="SSF53178">
    <property type="entry name" value="Peptidyl-tRNA hydrolase-like"/>
    <property type="match status" value="1"/>
</dbReference>
<dbReference type="PROSITE" id="PS01195">
    <property type="entry name" value="PEPT_TRNA_HYDROL_1"/>
    <property type="match status" value="1"/>
</dbReference>
<dbReference type="PROSITE" id="PS01196">
    <property type="entry name" value="PEPT_TRNA_HYDROL_2"/>
    <property type="match status" value="1"/>
</dbReference>
<feature type="chain" id="PRO_1000118415" description="Peptidyl-tRNA hydrolase">
    <location>
        <begin position="1"/>
        <end position="189"/>
    </location>
</feature>
<feature type="active site" description="Proton acceptor" evidence="1">
    <location>
        <position position="20"/>
    </location>
</feature>
<feature type="binding site" evidence="1">
    <location>
        <position position="15"/>
    </location>
    <ligand>
        <name>tRNA</name>
        <dbReference type="ChEBI" id="CHEBI:17843"/>
    </ligand>
</feature>
<feature type="binding site" evidence="1">
    <location>
        <position position="66"/>
    </location>
    <ligand>
        <name>tRNA</name>
        <dbReference type="ChEBI" id="CHEBI:17843"/>
    </ligand>
</feature>
<feature type="binding site" evidence="1">
    <location>
        <position position="68"/>
    </location>
    <ligand>
        <name>tRNA</name>
        <dbReference type="ChEBI" id="CHEBI:17843"/>
    </ligand>
</feature>
<feature type="binding site" evidence="1">
    <location>
        <position position="114"/>
    </location>
    <ligand>
        <name>tRNA</name>
        <dbReference type="ChEBI" id="CHEBI:17843"/>
    </ligand>
</feature>
<feature type="site" description="Discriminates between blocked and unblocked aminoacyl-tRNA" evidence="1">
    <location>
        <position position="10"/>
    </location>
</feature>
<feature type="site" description="Stabilizes the basic form of H active site to accept a proton" evidence="1">
    <location>
        <position position="93"/>
    </location>
</feature>
<comment type="function">
    <text evidence="1">Hydrolyzes ribosome-free peptidyl-tRNAs (with 1 or more amino acids incorporated), which drop off the ribosome during protein synthesis, or as a result of ribosome stalling.</text>
</comment>
<comment type="function">
    <text evidence="1">Catalyzes the release of premature peptidyl moieties from peptidyl-tRNA molecules trapped in stalled 50S ribosomal subunits, and thus maintains levels of free tRNAs and 50S ribosomes.</text>
</comment>
<comment type="catalytic activity">
    <reaction evidence="1">
        <text>an N-acyl-L-alpha-aminoacyl-tRNA + H2O = an N-acyl-L-amino acid + a tRNA + H(+)</text>
        <dbReference type="Rhea" id="RHEA:54448"/>
        <dbReference type="Rhea" id="RHEA-COMP:10123"/>
        <dbReference type="Rhea" id="RHEA-COMP:13883"/>
        <dbReference type="ChEBI" id="CHEBI:15377"/>
        <dbReference type="ChEBI" id="CHEBI:15378"/>
        <dbReference type="ChEBI" id="CHEBI:59874"/>
        <dbReference type="ChEBI" id="CHEBI:78442"/>
        <dbReference type="ChEBI" id="CHEBI:138191"/>
        <dbReference type="EC" id="3.1.1.29"/>
    </reaction>
</comment>
<comment type="subunit">
    <text evidence="1">Monomer.</text>
</comment>
<comment type="subcellular location">
    <subcellularLocation>
        <location evidence="1">Cytoplasm</location>
    </subcellularLocation>
</comment>
<comment type="similarity">
    <text evidence="1">Belongs to the PTH family.</text>
</comment>
<gene>
    <name evidence="1" type="primary">pth</name>
    <name type="ordered locus">SPT_0039</name>
</gene>
<evidence type="ECO:0000255" key="1">
    <source>
        <dbReference type="HAMAP-Rule" id="MF_00083"/>
    </source>
</evidence>
<proteinExistence type="inferred from homology"/>
<protein>
    <recommendedName>
        <fullName evidence="1">Peptidyl-tRNA hydrolase</fullName>
        <shortName evidence="1">Pth</shortName>
        <ecNumber evidence="1">3.1.1.29</ecNumber>
    </recommendedName>
</protein>
<reference key="1">
    <citation type="journal article" date="2010" name="Genome Biol.">
        <title>Structure and dynamics of the pan-genome of Streptococcus pneumoniae and closely related species.</title>
        <authorList>
            <person name="Donati C."/>
            <person name="Hiller N.L."/>
            <person name="Tettelin H."/>
            <person name="Muzzi A."/>
            <person name="Croucher N.J."/>
            <person name="Angiuoli S.V."/>
            <person name="Oggioni M."/>
            <person name="Dunning Hotopp J.C."/>
            <person name="Hu F.Z."/>
            <person name="Riley D.R."/>
            <person name="Covacci A."/>
            <person name="Mitchell T.J."/>
            <person name="Bentley S.D."/>
            <person name="Kilian M."/>
            <person name="Ehrlich G.D."/>
            <person name="Rappuoli R."/>
            <person name="Moxon E.R."/>
            <person name="Masignani V."/>
        </authorList>
    </citation>
    <scope>NUCLEOTIDE SEQUENCE [LARGE SCALE GENOMIC DNA]</scope>
    <source>
        <strain>Taiwan19F-14</strain>
    </source>
</reference>
<accession>C1CNN8</accession>
<organism>
    <name type="scientific">Streptococcus pneumoniae (strain Taiwan19F-14)</name>
    <dbReference type="NCBI Taxonomy" id="487213"/>
    <lineage>
        <taxon>Bacteria</taxon>
        <taxon>Bacillati</taxon>
        <taxon>Bacillota</taxon>
        <taxon>Bacilli</taxon>
        <taxon>Lactobacillales</taxon>
        <taxon>Streptococcaceae</taxon>
        <taxon>Streptococcus</taxon>
    </lineage>
</organism>
<sequence length="189" mass="21405">MTKLLVGLGNPGDKYFETKHNVGFMLIDQLAKKQNVTFTHDKIFQADLASFFLNGEKIYLVKPTTFMNESGKAVHALLTYYGLDIDDLLIIYDDLDMEVGKIRLRAKGSAGGHNGIKSIIQHIGTQVFNRVKIGIGRPKNGMSVVHHVLSKFDRDEYIGILQSVDKVDDSVNYYLQEKNFEKTMQRYNG</sequence>
<keyword id="KW-0963">Cytoplasm</keyword>
<keyword id="KW-0378">Hydrolase</keyword>
<keyword id="KW-0694">RNA-binding</keyword>
<keyword id="KW-0820">tRNA-binding</keyword>
<name>PTH_STRZT</name>